<proteinExistence type="inferred from homology"/>
<dbReference type="EC" id="1.18.1.2" evidence="1"/>
<dbReference type="EMBL" id="CP000560">
    <property type="protein sequence ID" value="ABS75247.1"/>
    <property type="molecule type" value="Genomic_DNA"/>
</dbReference>
<dbReference type="SMR" id="A7Z8C1"/>
<dbReference type="GeneID" id="93082061"/>
<dbReference type="KEGG" id="bay:RBAM_029160"/>
<dbReference type="HOGENOM" id="CLU_031864_5_5_9"/>
<dbReference type="Proteomes" id="UP000001120">
    <property type="component" value="Chromosome"/>
</dbReference>
<dbReference type="GO" id="GO:0004324">
    <property type="term" value="F:ferredoxin-NADP+ reductase activity"/>
    <property type="evidence" value="ECO:0007669"/>
    <property type="project" value="UniProtKB-UniRule"/>
</dbReference>
<dbReference type="GO" id="GO:0050660">
    <property type="term" value="F:flavin adenine dinucleotide binding"/>
    <property type="evidence" value="ECO:0007669"/>
    <property type="project" value="UniProtKB-UniRule"/>
</dbReference>
<dbReference type="GO" id="GO:0050661">
    <property type="term" value="F:NADP binding"/>
    <property type="evidence" value="ECO:0007669"/>
    <property type="project" value="UniProtKB-UniRule"/>
</dbReference>
<dbReference type="Gene3D" id="3.50.50.60">
    <property type="entry name" value="FAD/NAD(P)-binding domain"/>
    <property type="match status" value="2"/>
</dbReference>
<dbReference type="HAMAP" id="MF_01685">
    <property type="entry name" value="FENR2"/>
    <property type="match status" value="1"/>
</dbReference>
<dbReference type="InterPro" id="IPR036188">
    <property type="entry name" value="FAD/NAD-bd_sf"/>
</dbReference>
<dbReference type="InterPro" id="IPR023753">
    <property type="entry name" value="FAD/NAD-binding_dom"/>
</dbReference>
<dbReference type="InterPro" id="IPR022890">
    <property type="entry name" value="Fd--NADP_Rdtase_type_2"/>
</dbReference>
<dbReference type="InterPro" id="IPR050097">
    <property type="entry name" value="Ferredoxin-NADP_redctase_2"/>
</dbReference>
<dbReference type="PANTHER" id="PTHR48105">
    <property type="entry name" value="THIOREDOXIN REDUCTASE 1-RELATED-RELATED"/>
    <property type="match status" value="1"/>
</dbReference>
<dbReference type="Pfam" id="PF07992">
    <property type="entry name" value="Pyr_redox_2"/>
    <property type="match status" value="1"/>
</dbReference>
<dbReference type="PRINTS" id="PR00368">
    <property type="entry name" value="FADPNR"/>
</dbReference>
<dbReference type="PRINTS" id="PR00469">
    <property type="entry name" value="PNDRDTASEII"/>
</dbReference>
<dbReference type="SUPFAM" id="SSF51905">
    <property type="entry name" value="FAD/NAD(P)-binding domain"/>
    <property type="match status" value="1"/>
</dbReference>
<evidence type="ECO:0000255" key="1">
    <source>
        <dbReference type="HAMAP-Rule" id="MF_01685"/>
    </source>
</evidence>
<sequence>MQEDSKVYDITVIGGGPVGLFTAFYGGMRQASVKIIESLPQLGGQLSALYPEKYIYDVAGFPKIRAQELVNNLKEQMAKFDQTICLEQAVESVEKQADGVFKLVTNSETHYSKTVIITAGNGAFKPRKLELESAEQYEGKNLHYFIDDLNQFAGRRVAVLGGGDSAVDWALMLEPIAKEVSIIHRRDKFRAHEHSVENLHNSKVNVLTPFVPAELVGEDRIEQLVLEEVKGDRKEIIEIDDLIVNYGFVSSLGPIKNWGLDIEKNSIVVKSTMETNIEGFFAAGDICTYEGKVKLIASGFGEAPTAVNNAKAYMDPKARVQPLHSTSMFEK</sequence>
<reference key="1">
    <citation type="journal article" date="2007" name="Nat. Biotechnol.">
        <title>Comparative analysis of the complete genome sequence of the plant growth-promoting bacterium Bacillus amyloliquefaciens FZB42.</title>
        <authorList>
            <person name="Chen X.H."/>
            <person name="Koumoutsi A."/>
            <person name="Scholz R."/>
            <person name="Eisenreich A."/>
            <person name="Schneider K."/>
            <person name="Heinemeyer I."/>
            <person name="Morgenstern B."/>
            <person name="Voss B."/>
            <person name="Hess W.R."/>
            <person name="Reva O."/>
            <person name="Junge H."/>
            <person name="Voigt B."/>
            <person name="Jungblut P.R."/>
            <person name="Vater J."/>
            <person name="Suessmuth R."/>
            <person name="Liesegang H."/>
            <person name="Strittmatter A."/>
            <person name="Gottschalk G."/>
            <person name="Borriss R."/>
        </authorList>
    </citation>
    <scope>NUCLEOTIDE SEQUENCE [LARGE SCALE GENOMIC DNA]</scope>
    <source>
        <strain>DSM 23117 / BGSC 10A6 / LMG 26770 / FZB42</strain>
    </source>
</reference>
<accession>A7Z8C1</accession>
<name>FENR2_BACVZ</name>
<gene>
    <name type="ordered locus">RBAM_029160</name>
</gene>
<organism>
    <name type="scientific">Bacillus velezensis (strain DSM 23117 / BGSC 10A6 / LMG 26770 / FZB42)</name>
    <name type="common">Bacillus amyloliquefaciens subsp. plantarum</name>
    <dbReference type="NCBI Taxonomy" id="326423"/>
    <lineage>
        <taxon>Bacteria</taxon>
        <taxon>Bacillati</taxon>
        <taxon>Bacillota</taxon>
        <taxon>Bacilli</taxon>
        <taxon>Bacillales</taxon>
        <taxon>Bacillaceae</taxon>
        <taxon>Bacillus</taxon>
        <taxon>Bacillus amyloliquefaciens group</taxon>
    </lineage>
</organism>
<feature type="chain" id="PRO_0000364785" description="Ferredoxin--NADP reductase 2">
    <location>
        <begin position="1"/>
        <end position="331"/>
    </location>
</feature>
<feature type="binding site" evidence="1">
    <location>
        <position position="37"/>
    </location>
    <ligand>
        <name>FAD</name>
        <dbReference type="ChEBI" id="CHEBI:57692"/>
    </ligand>
</feature>
<feature type="binding site" evidence="1">
    <location>
        <position position="45"/>
    </location>
    <ligand>
        <name>FAD</name>
        <dbReference type="ChEBI" id="CHEBI:57692"/>
    </ligand>
</feature>
<feature type="binding site" evidence="1">
    <location>
        <position position="50"/>
    </location>
    <ligand>
        <name>FAD</name>
        <dbReference type="ChEBI" id="CHEBI:57692"/>
    </ligand>
</feature>
<feature type="binding site" evidence="1">
    <location>
        <position position="90"/>
    </location>
    <ligand>
        <name>FAD</name>
        <dbReference type="ChEBI" id="CHEBI:57692"/>
    </ligand>
</feature>
<feature type="binding site" evidence="1">
    <location>
        <position position="124"/>
    </location>
    <ligand>
        <name>FAD</name>
        <dbReference type="ChEBI" id="CHEBI:57692"/>
    </ligand>
</feature>
<feature type="binding site" evidence="1">
    <location>
        <position position="285"/>
    </location>
    <ligand>
        <name>FAD</name>
        <dbReference type="ChEBI" id="CHEBI:57692"/>
    </ligand>
</feature>
<feature type="binding site" evidence="1">
    <location>
        <position position="326"/>
    </location>
    <ligand>
        <name>FAD</name>
        <dbReference type="ChEBI" id="CHEBI:57692"/>
    </ligand>
</feature>
<keyword id="KW-0274">FAD</keyword>
<keyword id="KW-0285">Flavoprotein</keyword>
<keyword id="KW-0521">NADP</keyword>
<keyword id="KW-0560">Oxidoreductase</keyword>
<comment type="catalytic activity">
    <reaction evidence="1">
        <text>2 reduced [2Fe-2S]-[ferredoxin] + NADP(+) + H(+) = 2 oxidized [2Fe-2S]-[ferredoxin] + NADPH</text>
        <dbReference type="Rhea" id="RHEA:20125"/>
        <dbReference type="Rhea" id="RHEA-COMP:10000"/>
        <dbReference type="Rhea" id="RHEA-COMP:10001"/>
        <dbReference type="ChEBI" id="CHEBI:15378"/>
        <dbReference type="ChEBI" id="CHEBI:33737"/>
        <dbReference type="ChEBI" id="CHEBI:33738"/>
        <dbReference type="ChEBI" id="CHEBI:57783"/>
        <dbReference type="ChEBI" id="CHEBI:58349"/>
        <dbReference type="EC" id="1.18.1.2"/>
    </reaction>
</comment>
<comment type="cofactor">
    <cofactor evidence="1">
        <name>FAD</name>
        <dbReference type="ChEBI" id="CHEBI:57692"/>
    </cofactor>
    <text evidence="1">Binds 1 FAD per subunit.</text>
</comment>
<comment type="subunit">
    <text evidence="1">Homodimer.</text>
</comment>
<comment type="similarity">
    <text evidence="1">Belongs to the ferredoxin--NADP reductase type 2 family.</text>
</comment>
<protein>
    <recommendedName>
        <fullName evidence="1">Ferredoxin--NADP reductase 2</fullName>
        <shortName evidence="1">FNR 2</shortName>
        <shortName evidence="1">Fd-NADP(+) reductase 2</shortName>
        <ecNumber evidence="1">1.18.1.2</ecNumber>
    </recommendedName>
</protein>